<protein>
    <recommendedName>
        <fullName evidence="1">Leucyl/phenylalanyl-tRNA--protein transferase</fullName>
        <ecNumber evidence="1">2.3.2.6</ecNumber>
    </recommendedName>
    <alternativeName>
        <fullName evidence="1">L/F-transferase</fullName>
    </alternativeName>
    <alternativeName>
        <fullName evidence="1">Leucyltransferase</fullName>
    </alternativeName>
    <alternativeName>
        <fullName evidence="1">Phenyalanyltransferase</fullName>
    </alternativeName>
</protein>
<dbReference type="EC" id="2.3.2.6" evidence="1"/>
<dbReference type="EMBL" id="BA000012">
    <property type="protein sequence ID" value="BAB47837.1"/>
    <property type="molecule type" value="Genomic_DNA"/>
</dbReference>
<dbReference type="RefSeq" id="WP_010909207.1">
    <property type="nucleotide sequence ID" value="NC_002678.2"/>
</dbReference>
<dbReference type="SMR" id="Q98NC4"/>
<dbReference type="GeneID" id="66684288"/>
<dbReference type="KEGG" id="mlo:mll0202"/>
<dbReference type="eggNOG" id="COG2360">
    <property type="taxonomic scope" value="Bacteria"/>
</dbReference>
<dbReference type="HOGENOM" id="CLU_075045_1_1_5"/>
<dbReference type="Proteomes" id="UP000000552">
    <property type="component" value="Chromosome"/>
</dbReference>
<dbReference type="GO" id="GO:0005737">
    <property type="term" value="C:cytoplasm"/>
    <property type="evidence" value="ECO:0007669"/>
    <property type="project" value="UniProtKB-SubCell"/>
</dbReference>
<dbReference type="GO" id="GO:0008914">
    <property type="term" value="F:leucyl-tRNA--protein transferase activity"/>
    <property type="evidence" value="ECO:0007669"/>
    <property type="project" value="UniProtKB-UniRule"/>
</dbReference>
<dbReference type="GO" id="GO:0030163">
    <property type="term" value="P:protein catabolic process"/>
    <property type="evidence" value="ECO:0007669"/>
    <property type="project" value="UniProtKB-UniRule"/>
</dbReference>
<dbReference type="FunFam" id="3.40.630.70:FF:000001">
    <property type="entry name" value="Leucyl/phenylalanyl-tRNA--protein transferase"/>
    <property type="match status" value="1"/>
</dbReference>
<dbReference type="Gene3D" id="3.40.630.70">
    <property type="entry name" value="Leucyl/phenylalanyl-tRNA-protein transferase, C-terminal domain"/>
    <property type="match status" value="1"/>
</dbReference>
<dbReference type="HAMAP" id="MF_00688">
    <property type="entry name" value="Leu_Phe_trans"/>
    <property type="match status" value="1"/>
</dbReference>
<dbReference type="InterPro" id="IPR016181">
    <property type="entry name" value="Acyl_CoA_acyltransferase"/>
</dbReference>
<dbReference type="InterPro" id="IPR004616">
    <property type="entry name" value="Leu/Phe-tRNA_Trfase"/>
</dbReference>
<dbReference type="InterPro" id="IPR042203">
    <property type="entry name" value="Leu/Phe-tRNA_Trfase_C"/>
</dbReference>
<dbReference type="NCBIfam" id="TIGR00667">
    <property type="entry name" value="aat"/>
    <property type="match status" value="1"/>
</dbReference>
<dbReference type="PANTHER" id="PTHR30098">
    <property type="entry name" value="LEUCYL/PHENYLALANYL-TRNA--PROTEIN TRANSFERASE"/>
    <property type="match status" value="1"/>
</dbReference>
<dbReference type="PANTHER" id="PTHR30098:SF2">
    <property type="entry name" value="LEUCYL_PHENYLALANYL-TRNA--PROTEIN TRANSFERASE"/>
    <property type="match status" value="1"/>
</dbReference>
<dbReference type="Pfam" id="PF03588">
    <property type="entry name" value="Leu_Phe_trans"/>
    <property type="match status" value="1"/>
</dbReference>
<dbReference type="SUPFAM" id="SSF55729">
    <property type="entry name" value="Acyl-CoA N-acyltransferases (Nat)"/>
    <property type="match status" value="1"/>
</dbReference>
<feature type="chain" id="PRO_0000207238" description="Leucyl/phenylalanyl-tRNA--protein transferase">
    <location>
        <begin position="1"/>
        <end position="205"/>
    </location>
</feature>
<proteinExistence type="inferred from homology"/>
<gene>
    <name evidence="1" type="primary">aat</name>
    <name type="ordered locus">mll0202</name>
</gene>
<accession>Q98NC4</accession>
<name>LFTR_RHILO</name>
<evidence type="ECO:0000255" key="1">
    <source>
        <dbReference type="HAMAP-Rule" id="MF_00688"/>
    </source>
</evidence>
<sequence length="205" mass="23421">MTRPYAPGYRIPTDLLLKAYASGVFPMAESASDPEVFWVRPETRGIIPLDGFHTPKSLRKTIRKSLFDIRFDFDFEATIDGCAEKREERRSTWINAPIREAYVQLHRMGHCHSVEAWREDQLVGGLYGVSLGRVFFGESMFSKETDASKICLVHLVERLKARGFALLDTQFTTEHLKRFGAVDVPRGKYEKMLAEALKGEAIFFP</sequence>
<organism>
    <name type="scientific">Mesorhizobium japonicum (strain LMG 29417 / CECT 9101 / MAFF 303099)</name>
    <name type="common">Mesorhizobium loti (strain MAFF 303099)</name>
    <dbReference type="NCBI Taxonomy" id="266835"/>
    <lineage>
        <taxon>Bacteria</taxon>
        <taxon>Pseudomonadati</taxon>
        <taxon>Pseudomonadota</taxon>
        <taxon>Alphaproteobacteria</taxon>
        <taxon>Hyphomicrobiales</taxon>
        <taxon>Phyllobacteriaceae</taxon>
        <taxon>Mesorhizobium</taxon>
    </lineage>
</organism>
<comment type="function">
    <text evidence="1">Functions in the N-end rule pathway of protein degradation where it conjugates Leu, Phe and, less efficiently, Met from aminoacyl-tRNAs to the N-termini of proteins containing an N-terminal arginine or lysine.</text>
</comment>
<comment type="catalytic activity">
    <reaction evidence="1">
        <text>N-terminal L-lysyl-[protein] + L-leucyl-tRNA(Leu) = N-terminal L-leucyl-L-lysyl-[protein] + tRNA(Leu) + H(+)</text>
        <dbReference type="Rhea" id="RHEA:12340"/>
        <dbReference type="Rhea" id="RHEA-COMP:9613"/>
        <dbReference type="Rhea" id="RHEA-COMP:9622"/>
        <dbReference type="Rhea" id="RHEA-COMP:12670"/>
        <dbReference type="Rhea" id="RHEA-COMP:12671"/>
        <dbReference type="ChEBI" id="CHEBI:15378"/>
        <dbReference type="ChEBI" id="CHEBI:65249"/>
        <dbReference type="ChEBI" id="CHEBI:78442"/>
        <dbReference type="ChEBI" id="CHEBI:78494"/>
        <dbReference type="ChEBI" id="CHEBI:133043"/>
        <dbReference type="EC" id="2.3.2.6"/>
    </reaction>
</comment>
<comment type="catalytic activity">
    <reaction evidence="1">
        <text>N-terminal L-arginyl-[protein] + L-leucyl-tRNA(Leu) = N-terminal L-leucyl-L-arginyl-[protein] + tRNA(Leu) + H(+)</text>
        <dbReference type="Rhea" id="RHEA:50416"/>
        <dbReference type="Rhea" id="RHEA-COMP:9613"/>
        <dbReference type="Rhea" id="RHEA-COMP:9622"/>
        <dbReference type="Rhea" id="RHEA-COMP:12672"/>
        <dbReference type="Rhea" id="RHEA-COMP:12673"/>
        <dbReference type="ChEBI" id="CHEBI:15378"/>
        <dbReference type="ChEBI" id="CHEBI:64719"/>
        <dbReference type="ChEBI" id="CHEBI:78442"/>
        <dbReference type="ChEBI" id="CHEBI:78494"/>
        <dbReference type="ChEBI" id="CHEBI:133044"/>
        <dbReference type="EC" id="2.3.2.6"/>
    </reaction>
</comment>
<comment type="catalytic activity">
    <reaction evidence="1">
        <text>L-phenylalanyl-tRNA(Phe) + an N-terminal L-alpha-aminoacyl-[protein] = an N-terminal L-phenylalanyl-L-alpha-aminoacyl-[protein] + tRNA(Phe)</text>
        <dbReference type="Rhea" id="RHEA:43632"/>
        <dbReference type="Rhea" id="RHEA-COMP:9668"/>
        <dbReference type="Rhea" id="RHEA-COMP:9699"/>
        <dbReference type="Rhea" id="RHEA-COMP:10636"/>
        <dbReference type="Rhea" id="RHEA-COMP:10637"/>
        <dbReference type="ChEBI" id="CHEBI:78442"/>
        <dbReference type="ChEBI" id="CHEBI:78531"/>
        <dbReference type="ChEBI" id="CHEBI:78597"/>
        <dbReference type="ChEBI" id="CHEBI:83561"/>
        <dbReference type="EC" id="2.3.2.6"/>
    </reaction>
</comment>
<comment type="subcellular location">
    <subcellularLocation>
        <location evidence="1">Cytoplasm</location>
    </subcellularLocation>
</comment>
<comment type="similarity">
    <text evidence="1">Belongs to the L/F-transferase family.</text>
</comment>
<keyword id="KW-0012">Acyltransferase</keyword>
<keyword id="KW-0963">Cytoplasm</keyword>
<keyword id="KW-0808">Transferase</keyword>
<reference key="1">
    <citation type="journal article" date="2000" name="DNA Res.">
        <title>Complete genome structure of the nitrogen-fixing symbiotic bacterium Mesorhizobium loti.</title>
        <authorList>
            <person name="Kaneko T."/>
            <person name="Nakamura Y."/>
            <person name="Sato S."/>
            <person name="Asamizu E."/>
            <person name="Kato T."/>
            <person name="Sasamoto S."/>
            <person name="Watanabe A."/>
            <person name="Idesawa K."/>
            <person name="Ishikawa A."/>
            <person name="Kawashima K."/>
            <person name="Kimura T."/>
            <person name="Kishida Y."/>
            <person name="Kiyokawa C."/>
            <person name="Kohara M."/>
            <person name="Matsumoto M."/>
            <person name="Matsuno A."/>
            <person name="Mochizuki Y."/>
            <person name="Nakayama S."/>
            <person name="Nakazaki N."/>
            <person name="Shimpo S."/>
            <person name="Sugimoto M."/>
            <person name="Takeuchi C."/>
            <person name="Yamada M."/>
            <person name="Tabata S."/>
        </authorList>
    </citation>
    <scope>NUCLEOTIDE SEQUENCE [LARGE SCALE GENOMIC DNA]</scope>
    <source>
        <strain>LMG 29417 / CECT 9101 / MAFF 303099</strain>
    </source>
</reference>